<feature type="chain" id="PRO_0000099706" description="Uncharacterized 11.9 kDa protein">
    <location>
        <begin position="1"/>
        <end position="106"/>
    </location>
</feature>
<keyword id="KW-1185">Reference proteome</keyword>
<accession>P20554</accession>
<protein>
    <recommendedName>
        <fullName>Uncharacterized 11.9 kDa protein</fullName>
    </recommendedName>
</protein>
<sequence>MFNFSVSNPINPFSTSSSYLYALYSPLLNKSLNSIFNTFSTNSWDVTHCSTICLMKRVSSSDFPLILYMGFRLYLASIVYLSDSAINILSTCVPIILHLLDLHSLL</sequence>
<organismHost>
    <name type="scientific">Homo sapiens</name>
    <name type="common">Human</name>
    <dbReference type="NCBI Taxonomy" id="9606"/>
</organismHost>
<reference key="1">
    <citation type="journal article" date="1990" name="Virology">
        <title>The complete DNA sequence of vaccinia virus.</title>
        <authorList>
            <person name="Goebel S.J."/>
            <person name="Johnson G.P."/>
            <person name="Perkus M.E."/>
            <person name="Davis S.W."/>
            <person name="Winslow J.P."/>
            <person name="Paoletti E."/>
        </authorList>
    </citation>
    <scope>NUCLEOTIDE SEQUENCE [LARGE SCALE GENOMIC DNA]</scope>
</reference>
<reference key="2">
    <citation type="journal article" date="1990" name="Virology">
        <title>Appendix to 'The complete DNA sequence of vaccinia virus'.</title>
        <authorList>
            <person name="Goebel S.J."/>
            <person name="Johnson G.P."/>
            <person name="Perkus M.E."/>
            <person name="Davis S.W."/>
            <person name="Winslow J.P."/>
            <person name="Paoletti E."/>
        </authorList>
    </citation>
    <scope>COMPLETE GENOME</scope>
</reference>
<name>YVEB_VACCC</name>
<gene>
    <name type="ORF">E ORF B</name>
</gene>
<proteinExistence type="predicted"/>
<dbReference type="EMBL" id="M35027">
    <property type="protein sequence ID" value="AAA48043.1"/>
    <property type="molecule type" value="Genomic_DNA"/>
</dbReference>
<dbReference type="PIR" id="H42509">
    <property type="entry name" value="H42509"/>
</dbReference>
<dbReference type="Proteomes" id="UP000008269">
    <property type="component" value="Segment"/>
</dbReference>
<organism>
    <name type="scientific">Vaccinia virus (strain Copenhagen)</name>
    <name type="common">VACV</name>
    <dbReference type="NCBI Taxonomy" id="10249"/>
    <lineage>
        <taxon>Viruses</taxon>
        <taxon>Varidnaviria</taxon>
        <taxon>Bamfordvirae</taxon>
        <taxon>Nucleocytoviricota</taxon>
        <taxon>Pokkesviricetes</taxon>
        <taxon>Chitovirales</taxon>
        <taxon>Poxviridae</taxon>
        <taxon>Chordopoxvirinae</taxon>
        <taxon>Orthopoxvirus</taxon>
        <taxon>Vaccinia virus</taxon>
    </lineage>
</organism>